<sequence length="251" mass="29928">MIPNIIHQIWIQGYESIPSELRKYHENCLKINYGFKNEFWDNDRIRNFLKNNFEPEYLELYDKYKIYAQKADFARYAILKIHGGIYLDMDMVCRKNLGDFLGLGFFFTAYKLKNVFTNYLNGVIGSRPNHPVFDYIFKNMFLRQNDASNVTNSTGTKLFRDSITEYTKNNPTNDISLIDSKYLHPCNLYNDKNCPYTCTDCYIAHTNYSSWAPHLKLCKIFFENKYLIFIIIIIIFIILILLWIKYKFNKS</sequence>
<protein>
    <recommendedName>
        <fullName>Uncharacterized glycosyltransferase L373</fullName>
        <ecNumber>2.4.-.-</ecNumber>
    </recommendedName>
</protein>
<comment type="subcellular location">
    <subcellularLocation>
        <location evidence="2">Membrane</location>
        <topology evidence="2">Single-pass membrane protein</topology>
    </subcellularLocation>
</comment>
<comment type="similarity">
    <text evidence="2">Belongs to the glycosyltransferase 32 family.</text>
</comment>
<feature type="chain" id="PRO_0000309210" description="Uncharacterized glycosyltransferase L373">
    <location>
        <begin position="1"/>
        <end position="251"/>
    </location>
</feature>
<feature type="transmembrane region" description="Helical" evidence="1">
    <location>
        <begin position="226"/>
        <end position="246"/>
    </location>
</feature>
<feature type="glycosylation site" description="N-linked (GlcNAc...) asparagine; by host" evidence="1">
    <location>
        <position position="149"/>
    </location>
</feature>
<feature type="glycosylation site" description="N-linked (GlcNAc...) asparagine; by host" evidence="1">
    <location>
        <position position="152"/>
    </location>
</feature>
<feature type="glycosylation site" description="N-linked (GlcNAc...) asparagine; by host" evidence="1">
    <location>
        <position position="207"/>
    </location>
</feature>
<organismHost>
    <name type="scientific">Acanthamoeba polyphaga</name>
    <name type="common">Amoeba</name>
    <dbReference type="NCBI Taxonomy" id="5757"/>
</organismHost>
<proteinExistence type="inferred from homology"/>
<keyword id="KW-0325">Glycoprotein</keyword>
<keyword id="KW-0328">Glycosyltransferase</keyword>
<keyword id="KW-0472">Membrane</keyword>
<keyword id="KW-1185">Reference proteome</keyword>
<keyword id="KW-0808">Transferase</keyword>
<keyword id="KW-0812">Transmembrane</keyword>
<keyword id="KW-1133">Transmembrane helix</keyword>
<organism>
    <name type="scientific">Acanthamoeba polyphaga mimivirus</name>
    <name type="common">APMV</name>
    <dbReference type="NCBI Taxonomy" id="212035"/>
    <lineage>
        <taxon>Viruses</taxon>
        <taxon>Varidnaviria</taxon>
        <taxon>Bamfordvirae</taxon>
        <taxon>Nucleocytoviricota</taxon>
        <taxon>Megaviricetes</taxon>
        <taxon>Imitervirales</taxon>
        <taxon>Mimiviridae</taxon>
        <taxon>Megamimivirinae</taxon>
        <taxon>Mimivirus</taxon>
        <taxon>Mimivirus bradfordmassiliense</taxon>
    </lineage>
</organism>
<evidence type="ECO:0000255" key="1"/>
<evidence type="ECO:0000305" key="2"/>
<gene>
    <name type="ordered locus">MIMI_L373</name>
</gene>
<accession>Q5UQW4</accession>
<reference key="1">
    <citation type="journal article" date="2004" name="Science">
        <title>The 1.2-megabase genome sequence of Mimivirus.</title>
        <authorList>
            <person name="Raoult D."/>
            <person name="Audic S."/>
            <person name="Robert C."/>
            <person name="Abergel C."/>
            <person name="Renesto P."/>
            <person name="Ogata H."/>
            <person name="La Scola B."/>
            <person name="Susan M."/>
            <person name="Claverie J.-M."/>
        </authorList>
    </citation>
    <scope>NUCLEOTIDE SEQUENCE [LARGE SCALE GENOMIC DNA]</scope>
    <source>
        <strain>Rowbotham-Bradford</strain>
    </source>
</reference>
<name>YL373_MIMIV</name>
<dbReference type="EC" id="2.4.-.-"/>
<dbReference type="EMBL" id="AY653733">
    <property type="protein sequence ID" value="AAV50642.1"/>
    <property type="molecule type" value="Genomic_DNA"/>
</dbReference>
<dbReference type="SMR" id="Q5UQW4"/>
<dbReference type="CAZy" id="GT32">
    <property type="family name" value="Glycosyltransferase Family 32"/>
</dbReference>
<dbReference type="KEGG" id="vg:9924993"/>
<dbReference type="OrthoDB" id="31803at10239"/>
<dbReference type="Proteomes" id="UP000001134">
    <property type="component" value="Genome"/>
</dbReference>
<dbReference type="GO" id="GO:0016020">
    <property type="term" value="C:membrane"/>
    <property type="evidence" value="ECO:0007669"/>
    <property type="project" value="UniProtKB-SubCell"/>
</dbReference>
<dbReference type="GO" id="GO:0000030">
    <property type="term" value="F:mannosyltransferase activity"/>
    <property type="evidence" value="ECO:0007669"/>
    <property type="project" value="TreeGrafter"/>
</dbReference>
<dbReference type="GO" id="GO:0051999">
    <property type="term" value="P:mannosyl-inositol phosphorylceramide biosynthetic process"/>
    <property type="evidence" value="ECO:0007669"/>
    <property type="project" value="TreeGrafter"/>
</dbReference>
<dbReference type="Gene3D" id="3.90.550.20">
    <property type="match status" value="1"/>
</dbReference>
<dbReference type="InterPro" id="IPR051706">
    <property type="entry name" value="Glycosyltransferase_domain"/>
</dbReference>
<dbReference type="InterPro" id="IPR007577">
    <property type="entry name" value="GlycoTrfase_DXD_sugar-bd_CS"/>
</dbReference>
<dbReference type="InterPro" id="IPR029044">
    <property type="entry name" value="Nucleotide-diphossugar_trans"/>
</dbReference>
<dbReference type="PANTHER" id="PTHR32385:SF15">
    <property type="entry name" value="INOSITOL PHOSPHOCERAMIDE MANNOSYLTRANSFERASE 1"/>
    <property type="match status" value="1"/>
</dbReference>
<dbReference type="PANTHER" id="PTHR32385">
    <property type="entry name" value="MANNOSYL PHOSPHORYLINOSITOL CERAMIDE SYNTHASE"/>
    <property type="match status" value="1"/>
</dbReference>
<dbReference type="Pfam" id="PF04488">
    <property type="entry name" value="Gly_transf_sug"/>
    <property type="match status" value="1"/>
</dbReference>
<dbReference type="SUPFAM" id="SSF53448">
    <property type="entry name" value="Nucleotide-diphospho-sugar transferases"/>
    <property type="match status" value="1"/>
</dbReference>